<dbReference type="EC" id="1.3.1.21" evidence="14 18 19"/>
<dbReference type="EC" id="3.3.2.11" evidence="13"/>
<dbReference type="EMBL" id="AF096305">
    <property type="protein sequence ID" value="AAD09766.1"/>
    <property type="molecule type" value="mRNA"/>
</dbReference>
<dbReference type="EMBL" id="AF034544">
    <property type="protein sequence ID" value="AAC05086.1"/>
    <property type="molecule type" value="mRNA"/>
</dbReference>
<dbReference type="EMBL" id="AF110060">
    <property type="protein sequence ID" value="AAD24762.1"/>
    <property type="molecule type" value="Genomic_DNA"/>
</dbReference>
<dbReference type="EMBL" id="AF067127">
    <property type="protein sequence ID" value="AAD02816.1"/>
    <property type="molecule type" value="mRNA"/>
</dbReference>
<dbReference type="EMBL" id="AK312775">
    <property type="protein sequence ID" value="BAG35639.1"/>
    <property type="molecule type" value="mRNA"/>
</dbReference>
<dbReference type="EMBL" id="BC000054">
    <property type="protein sequence ID" value="AAH00054.1"/>
    <property type="molecule type" value="mRNA"/>
</dbReference>
<dbReference type="EMBL" id="AF062481">
    <property type="protein sequence ID" value="AAC18345.1"/>
    <property type="molecule type" value="mRNA"/>
</dbReference>
<dbReference type="CCDS" id="CCDS8200.1"/>
<dbReference type="RefSeq" id="NP_001157289.1">
    <property type="nucleotide sequence ID" value="NM_001163817.2"/>
</dbReference>
<dbReference type="RefSeq" id="NP_001351.2">
    <property type="nucleotide sequence ID" value="NM_001360.3"/>
</dbReference>
<dbReference type="RefSeq" id="NP_001412038.1">
    <property type="nucleotide sequence ID" value="NM_001425109.1"/>
</dbReference>
<dbReference type="RefSeq" id="NP_001412039.1">
    <property type="nucleotide sequence ID" value="NM_001425110.1"/>
</dbReference>
<dbReference type="SMR" id="Q9UBM7"/>
<dbReference type="BioGRID" id="108063">
    <property type="interactions" value="206"/>
</dbReference>
<dbReference type="CORUM" id="Q9UBM7"/>
<dbReference type="FunCoup" id="Q9UBM7">
    <property type="interactions" value="622"/>
</dbReference>
<dbReference type="IntAct" id="Q9UBM7">
    <property type="interactions" value="65"/>
</dbReference>
<dbReference type="MINT" id="Q9UBM7"/>
<dbReference type="STRING" id="9606.ENSP00000347717"/>
<dbReference type="BindingDB" id="Q9UBM7"/>
<dbReference type="ChEMBL" id="CHEMBL2169735"/>
<dbReference type="DrugBank" id="DB00157">
    <property type="generic name" value="NADH"/>
</dbReference>
<dbReference type="DrugCentral" id="Q9UBM7"/>
<dbReference type="SwissLipids" id="SLP:000001078"/>
<dbReference type="GlyGen" id="Q9UBM7">
    <property type="glycosylation" value="1 site, 1 O-linked glycan (1 site)"/>
</dbReference>
<dbReference type="iPTMnet" id="Q9UBM7"/>
<dbReference type="PhosphoSitePlus" id="Q9UBM7"/>
<dbReference type="SwissPalm" id="Q9UBM7"/>
<dbReference type="BioMuta" id="DHCR7"/>
<dbReference type="DMDM" id="20138066"/>
<dbReference type="CPTAC" id="CPTAC-353"/>
<dbReference type="CPTAC" id="CPTAC-354"/>
<dbReference type="jPOST" id="Q9UBM7"/>
<dbReference type="MassIVE" id="Q9UBM7"/>
<dbReference type="PaxDb" id="9606-ENSP00000347717"/>
<dbReference type="PeptideAtlas" id="Q9UBM7"/>
<dbReference type="ProteomicsDB" id="84009"/>
<dbReference type="Pumba" id="Q9UBM7"/>
<dbReference type="Antibodypedia" id="30720">
    <property type="antibodies" value="168 antibodies from 26 providers"/>
</dbReference>
<dbReference type="DNASU" id="1717"/>
<dbReference type="Ensembl" id="ENST00000355527.8">
    <property type="protein sequence ID" value="ENSP00000347717.4"/>
    <property type="gene ID" value="ENSG00000172893.18"/>
</dbReference>
<dbReference type="Ensembl" id="ENST00000407721.6">
    <property type="protein sequence ID" value="ENSP00000384739.2"/>
    <property type="gene ID" value="ENSG00000172893.18"/>
</dbReference>
<dbReference type="Ensembl" id="ENST00000525346.6">
    <property type="protein sequence ID" value="ENSP00000435707.3"/>
    <property type="gene ID" value="ENSG00000172893.18"/>
</dbReference>
<dbReference type="Ensembl" id="ENST00000526780.6">
    <property type="protein sequence ID" value="ENSP00000435668.2"/>
    <property type="gene ID" value="ENSG00000172893.18"/>
</dbReference>
<dbReference type="GeneID" id="1717"/>
<dbReference type="KEGG" id="hsa:1717"/>
<dbReference type="MANE-Select" id="ENST00000355527.8">
    <property type="protein sequence ID" value="ENSP00000347717.4"/>
    <property type="RefSeq nucleotide sequence ID" value="NM_001360.3"/>
    <property type="RefSeq protein sequence ID" value="NP_001351.2"/>
</dbReference>
<dbReference type="UCSC" id="uc001oqk.4">
    <property type="organism name" value="human"/>
</dbReference>
<dbReference type="AGR" id="HGNC:2860"/>
<dbReference type="CTD" id="1717"/>
<dbReference type="DisGeNET" id="1717"/>
<dbReference type="GeneCards" id="DHCR7"/>
<dbReference type="GeneReviews" id="DHCR7"/>
<dbReference type="HGNC" id="HGNC:2860">
    <property type="gene designation" value="DHCR7"/>
</dbReference>
<dbReference type="HPA" id="ENSG00000172893">
    <property type="expression patterns" value="Tissue enhanced (liver)"/>
</dbReference>
<dbReference type="MalaCards" id="DHCR7"/>
<dbReference type="MIM" id="270400">
    <property type="type" value="phenotype"/>
</dbReference>
<dbReference type="MIM" id="602858">
    <property type="type" value="gene"/>
</dbReference>
<dbReference type="neXtProt" id="NX_Q9UBM7"/>
<dbReference type="OpenTargets" id="ENSG00000172893"/>
<dbReference type="Orphanet" id="818">
    <property type="disease" value="Smith-Lemli-Opitz syndrome"/>
</dbReference>
<dbReference type="PharmGKB" id="PA27321"/>
<dbReference type="VEuPathDB" id="HostDB:ENSG00000172893"/>
<dbReference type="eggNOG" id="KOG1435">
    <property type="taxonomic scope" value="Eukaryota"/>
</dbReference>
<dbReference type="GeneTree" id="ENSGT00390000000417"/>
<dbReference type="HOGENOM" id="CLU_015631_0_0_1"/>
<dbReference type="InParanoid" id="Q9UBM7"/>
<dbReference type="OMA" id="KYGQYWA"/>
<dbReference type="OrthoDB" id="5326588at2759"/>
<dbReference type="PAN-GO" id="Q9UBM7">
    <property type="GO annotations" value="5 GO annotations based on evolutionary models"/>
</dbReference>
<dbReference type="PhylomeDB" id="Q9UBM7"/>
<dbReference type="TreeFam" id="TF101180"/>
<dbReference type="BioCyc" id="MetaCyc:HS10588-MONOMER"/>
<dbReference type="BRENDA" id="1.3.1.21">
    <property type="organism ID" value="2681"/>
</dbReference>
<dbReference type="PathwayCommons" id="Q9UBM7"/>
<dbReference type="Reactome" id="R-HSA-2426168">
    <property type="pathway name" value="Activation of gene expression by SREBF (SREBP)"/>
</dbReference>
<dbReference type="Reactome" id="R-HSA-6807047">
    <property type="pathway name" value="Cholesterol biosynthesis via desmosterol"/>
</dbReference>
<dbReference type="Reactome" id="R-HSA-6807062">
    <property type="pathway name" value="Cholesterol biosynthesis via lathosterol"/>
</dbReference>
<dbReference type="SABIO-RK" id="Q9UBM7"/>
<dbReference type="SignaLink" id="Q9UBM7"/>
<dbReference type="SIGNOR" id="Q9UBM7"/>
<dbReference type="UniPathway" id="UPA00063"/>
<dbReference type="BioGRID-ORCS" id="1717">
    <property type="hits" value="14 hits in 1166 CRISPR screens"/>
</dbReference>
<dbReference type="ChiTaRS" id="DHCR7">
    <property type="organism name" value="human"/>
</dbReference>
<dbReference type="GeneWiki" id="7-Dehydrocholesterol_reductase"/>
<dbReference type="GenomeRNAi" id="1717"/>
<dbReference type="Pharos" id="Q9UBM7">
    <property type="development level" value="Tchem"/>
</dbReference>
<dbReference type="PRO" id="PR:Q9UBM7"/>
<dbReference type="Proteomes" id="UP000005640">
    <property type="component" value="Chromosome 11"/>
</dbReference>
<dbReference type="RNAct" id="Q9UBM7">
    <property type="molecule type" value="protein"/>
</dbReference>
<dbReference type="Bgee" id="ENSG00000172893">
    <property type="expression patterns" value="Expressed in adrenal tissue and 174 other cell types or tissues"/>
</dbReference>
<dbReference type="ExpressionAtlas" id="Q9UBM7">
    <property type="expression patterns" value="baseline and differential"/>
</dbReference>
<dbReference type="GO" id="GO:0005783">
    <property type="term" value="C:endoplasmic reticulum"/>
    <property type="evidence" value="ECO:0000314"/>
    <property type="project" value="UniProtKB"/>
</dbReference>
<dbReference type="GO" id="GO:0005789">
    <property type="term" value="C:endoplasmic reticulum membrane"/>
    <property type="evidence" value="ECO:0000318"/>
    <property type="project" value="GO_Central"/>
</dbReference>
<dbReference type="GO" id="GO:0016020">
    <property type="term" value="C:membrane"/>
    <property type="evidence" value="ECO:0007005"/>
    <property type="project" value="UniProtKB"/>
</dbReference>
<dbReference type="GO" id="GO:0005640">
    <property type="term" value="C:nuclear outer membrane"/>
    <property type="evidence" value="ECO:0000314"/>
    <property type="project" value="UniProtKB"/>
</dbReference>
<dbReference type="GO" id="GO:0047598">
    <property type="term" value="F:7-dehydrocholesterol reductase activity"/>
    <property type="evidence" value="ECO:0000314"/>
    <property type="project" value="UniProtKB"/>
</dbReference>
<dbReference type="GO" id="GO:0033963">
    <property type="term" value="F:cholesterol-5,6-oxide hydrolase activity"/>
    <property type="evidence" value="ECO:0000315"/>
    <property type="project" value="UniProtKB"/>
</dbReference>
<dbReference type="GO" id="GO:0050661">
    <property type="term" value="F:NADP binding"/>
    <property type="evidence" value="ECO:0000250"/>
    <property type="project" value="UniProtKB"/>
</dbReference>
<dbReference type="GO" id="GO:0006695">
    <property type="term" value="P:cholesterol biosynthetic process"/>
    <property type="evidence" value="ECO:0000315"/>
    <property type="project" value="UniProtKB"/>
</dbReference>
<dbReference type="GO" id="GO:0033489">
    <property type="term" value="P:cholesterol biosynthetic process via desmosterol"/>
    <property type="evidence" value="ECO:0000304"/>
    <property type="project" value="Reactome"/>
</dbReference>
<dbReference type="GO" id="GO:0033490">
    <property type="term" value="P:cholesterol biosynthetic process via lathosterol"/>
    <property type="evidence" value="ECO:0000315"/>
    <property type="project" value="UniProtKB"/>
</dbReference>
<dbReference type="GO" id="GO:0160020">
    <property type="term" value="P:positive regulation of ferroptosis"/>
    <property type="evidence" value="ECO:0000315"/>
    <property type="project" value="UniProtKB"/>
</dbReference>
<dbReference type="FunFam" id="1.20.120.1630:FF:000004">
    <property type="entry name" value="7-dehydrocholesterol reductase"/>
    <property type="match status" value="1"/>
</dbReference>
<dbReference type="Gene3D" id="1.20.120.1630">
    <property type="match status" value="1"/>
</dbReference>
<dbReference type="InterPro" id="IPR001171">
    <property type="entry name" value="ERG24_DHCR-like"/>
</dbReference>
<dbReference type="InterPro" id="IPR018083">
    <property type="entry name" value="Sterol_reductase_CS"/>
</dbReference>
<dbReference type="PANTHER" id="PTHR21257:SF38">
    <property type="entry name" value="7-DEHYDROCHOLESTEROL REDUCTASE"/>
    <property type="match status" value="1"/>
</dbReference>
<dbReference type="PANTHER" id="PTHR21257">
    <property type="entry name" value="DELTA(14)-STEROL REDUCTASE"/>
    <property type="match status" value="1"/>
</dbReference>
<dbReference type="Pfam" id="PF01222">
    <property type="entry name" value="ERG4_ERG24"/>
    <property type="match status" value="1"/>
</dbReference>
<dbReference type="PROSITE" id="PS01017">
    <property type="entry name" value="STEROL_REDUCT_1"/>
    <property type="match status" value="1"/>
</dbReference>
<dbReference type="PROSITE" id="PS01018">
    <property type="entry name" value="STEROL_REDUCT_2"/>
    <property type="match status" value="1"/>
</dbReference>
<evidence type="ECO:0000250" key="1">
    <source>
        <dbReference type="UniProtKB" id="G4SW86"/>
    </source>
</evidence>
<evidence type="ECO:0000250" key="2">
    <source>
        <dbReference type="UniProtKB" id="O88455"/>
    </source>
</evidence>
<evidence type="ECO:0000255" key="3"/>
<evidence type="ECO:0000256" key="4">
    <source>
        <dbReference type="SAM" id="MobiDB-lite"/>
    </source>
</evidence>
<evidence type="ECO:0000269" key="5">
    <source>
    </source>
</evidence>
<evidence type="ECO:0000269" key="6">
    <source>
    </source>
</evidence>
<evidence type="ECO:0000269" key="7">
    <source>
    </source>
</evidence>
<evidence type="ECO:0000269" key="8">
    <source>
    </source>
</evidence>
<evidence type="ECO:0000269" key="9">
    <source>
    </source>
</evidence>
<evidence type="ECO:0000269" key="10">
    <source>
    </source>
</evidence>
<evidence type="ECO:0000269" key="11">
    <source>
    </source>
</evidence>
<evidence type="ECO:0000269" key="12">
    <source>
    </source>
</evidence>
<evidence type="ECO:0000269" key="13">
    <source>
    </source>
</evidence>
<evidence type="ECO:0000269" key="14">
    <source>
    </source>
</evidence>
<evidence type="ECO:0000269" key="15">
    <source>
    </source>
</evidence>
<evidence type="ECO:0000269" key="16">
    <source>
    </source>
</evidence>
<evidence type="ECO:0000269" key="17">
    <source>
    </source>
</evidence>
<evidence type="ECO:0000269" key="18">
    <source>
    </source>
</evidence>
<evidence type="ECO:0000269" key="19">
    <source>
    </source>
</evidence>
<evidence type="ECO:0000269" key="20">
    <source>
    </source>
</evidence>
<evidence type="ECO:0000269" key="21">
    <source>
    </source>
</evidence>
<evidence type="ECO:0000269" key="22">
    <source>
    </source>
</evidence>
<evidence type="ECO:0000303" key="23">
    <source>
    </source>
</evidence>
<evidence type="ECO:0000303" key="24">
    <source>
    </source>
</evidence>
<evidence type="ECO:0000303" key="25">
    <source>
    </source>
</evidence>
<evidence type="ECO:0000305" key="26"/>
<evidence type="ECO:0000305" key="27">
    <source>
    </source>
</evidence>
<evidence type="ECO:0000305" key="28">
    <source>
    </source>
</evidence>
<evidence type="ECO:0000312" key="29">
    <source>
        <dbReference type="HGNC" id="HGNC:2860"/>
    </source>
</evidence>
<evidence type="ECO:0007744" key="30">
    <source>
    </source>
</evidence>
<evidence type="ECO:0007744" key="31">
    <source>
    </source>
</evidence>
<evidence type="ECO:0007744" key="32">
    <source>
    </source>
</evidence>
<evidence type="ECO:0007744" key="33">
    <source>
    </source>
</evidence>
<evidence type="ECO:0007744" key="34">
    <source>
    </source>
</evidence>
<evidence type="ECO:0007744" key="35">
    <source>
    </source>
</evidence>
<evidence type="ECO:0007744" key="36">
    <source>
    </source>
</evidence>
<reference key="1">
    <citation type="journal article" date="1998" name="Am. J. Hum. Genet.">
        <title>Smith-Lemli-Opitz syndrome is caused by mutations in the 7-dehydrocholesterol reductase gene.</title>
        <authorList>
            <person name="Waterham H.R."/>
            <person name="Wijburg F.A."/>
            <person name="Hennekam R.C.M."/>
            <person name="Vreken P."/>
            <person name="Poll-The B.T."/>
            <person name="Dorland L."/>
            <person name="Duran M."/>
            <person name="Jira P.E."/>
            <person name="Smeitink J.A.M."/>
            <person name="Wevers R.A."/>
            <person name="Wanders R.J.A."/>
        </authorList>
    </citation>
    <scope>NUCLEOTIDE SEQUENCE [MRNA]</scope>
    <scope>VARIANTS SLOS LEU-119; ARG-244 AND CYS-248</scope>
</reference>
<reference key="2">
    <citation type="journal article" date="1998" name="Proc. Natl. Acad. Sci. U.S.A.">
        <title>Molecular cloning and expression of the human delta7-sterol reductase.</title>
        <authorList>
            <person name="Moebius F.F."/>
            <person name="Fitzky B.U."/>
            <person name="Lee J.N."/>
            <person name="Paik Y.K."/>
            <person name="Glossmann H."/>
        </authorList>
    </citation>
    <scope>NUCLEOTIDE SEQUENCE [MRNA]</scope>
    <scope>VARIANT LEU-5</scope>
    <scope>CATALYTIC ACTIVITY</scope>
    <scope>TISSUE SPECIFICITY</scope>
    <scope>FUNCTION</scope>
    <source>
        <tissue>Liver</tissue>
    </source>
</reference>
<reference key="3">
    <citation type="journal article" date="1998" name="Genomics">
        <title>The human lamin B receptor/sterol reductase multigene family.</title>
        <authorList>
            <person name="Holmer L."/>
            <person name="Pezhman A."/>
            <person name="Worman H.J."/>
        </authorList>
    </citation>
    <scope>NUCLEOTIDE SEQUENCE [GENOMIC DNA]</scope>
    <scope>SUBCELLULAR LOCATION</scope>
    <scope>TISSUE SPECIFICITY</scope>
</reference>
<reference key="4">
    <citation type="journal article" date="2004" name="Nat. Genet.">
        <title>Complete sequencing and characterization of 21,243 full-length human cDNAs.</title>
        <authorList>
            <person name="Ota T."/>
            <person name="Suzuki Y."/>
            <person name="Nishikawa T."/>
            <person name="Otsuki T."/>
            <person name="Sugiyama T."/>
            <person name="Irie R."/>
            <person name="Wakamatsu A."/>
            <person name="Hayashi K."/>
            <person name="Sato H."/>
            <person name="Nagai K."/>
            <person name="Kimura K."/>
            <person name="Makita H."/>
            <person name="Sekine M."/>
            <person name="Obayashi M."/>
            <person name="Nishi T."/>
            <person name="Shibahara T."/>
            <person name="Tanaka T."/>
            <person name="Ishii S."/>
            <person name="Yamamoto J."/>
            <person name="Saito K."/>
            <person name="Kawai Y."/>
            <person name="Isono Y."/>
            <person name="Nakamura Y."/>
            <person name="Nagahari K."/>
            <person name="Murakami K."/>
            <person name="Yasuda T."/>
            <person name="Iwayanagi T."/>
            <person name="Wagatsuma M."/>
            <person name="Shiratori A."/>
            <person name="Sudo H."/>
            <person name="Hosoiri T."/>
            <person name="Kaku Y."/>
            <person name="Kodaira H."/>
            <person name="Kondo H."/>
            <person name="Sugawara M."/>
            <person name="Takahashi M."/>
            <person name="Kanda K."/>
            <person name="Yokoi T."/>
            <person name="Furuya T."/>
            <person name="Kikkawa E."/>
            <person name="Omura Y."/>
            <person name="Abe K."/>
            <person name="Kamihara K."/>
            <person name="Katsuta N."/>
            <person name="Sato K."/>
            <person name="Tanikawa M."/>
            <person name="Yamazaki M."/>
            <person name="Ninomiya K."/>
            <person name="Ishibashi T."/>
            <person name="Yamashita H."/>
            <person name="Murakawa K."/>
            <person name="Fujimori K."/>
            <person name="Tanai H."/>
            <person name="Kimata M."/>
            <person name="Watanabe M."/>
            <person name="Hiraoka S."/>
            <person name="Chiba Y."/>
            <person name="Ishida S."/>
            <person name="Ono Y."/>
            <person name="Takiguchi S."/>
            <person name="Watanabe S."/>
            <person name="Yosida M."/>
            <person name="Hotuta T."/>
            <person name="Kusano J."/>
            <person name="Kanehori K."/>
            <person name="Takahashi-Fujii A."/>
            <person name="Hara H."/>
            <person name="Tanase T.-O."/>
            <person name="Nomura Y."/>
            <person name="Togiya S."/>
            <person name="Komai F."/>
            <person name="Hara R."/>
            <person name="Takeuchi K."/>
            <person name="Arita M."/>
            <person name="Imose N."/>
            <person name="Musashino K."/>
            <person name="Yuuki H."/>
            <person name="Oshima A."/>
            <person name="Sasaki N."/>
            <person name="Aotsuka S."/>
            <person name="Yoshikawa Y."/>
            <person name="Matsunawa H."/>
            <person name="Ichihara T."/>
            <person name="Shiohata N."/>
            <person name="Sano S."/>
            <person name="Moriya S."/>
            <person name="Momiyama H."/>
            <person name="Satoh N."/>
            <person name="Takami S."/>
            <person name="Terashima Y."/>
            <person name="Suzuki O."/>
            <person name="Nakagawa S."/>
            <person name="Senoh A."/>
            <person name="Mizoguchi H."/>
            <person name="Goto Y."/>
            <person name="Shimizu F."/>
            <person name="Wakebe H."/>
            <person name="Hishigaki H."/>
            <person name="Watanabe T."/>
            <person name="Sugiyama A."/>
            <person name="Takemoto M."/>
            <person name="Kawakami B."/>
            <person name="Yamazaki M."/>
            <person name="Watanabe K."/>
            <person name="Kumagai A."/>
            <person name="Itakura S."/>
            <person name="Fukuzumi Y."/>
            <person name="Fujimori Y."/>
            <person name="Komiyama M."/>
            <person name="Tashiro H."/>
            <person name="Tanigami A."/>
            <person name="Fujiwara T."/>
            <person name="Ono T."/>
            <person name="Yamada K."/>
            <person name="Fujii Y."/>
            <person name="Ozaki K."/>
            <person name="Hirao M."/>
            <person name="Ohmori Y."/>
            <person name="Kawabata A."/>
            <person name="Hikiji T."/>
            <person name="Kobatake N."/>
            <person name="Inagaki H."/>
            <person name="Ikema Y."/>
            <person name="Okamoto S."/>
            <person name="Okitani R."/>
            <person name="Kawakami T."/>
            <person name="Noguchi S."/>
            <person name="Itoh T."/>
            <person name="Shigeta K."/>
            <person name="Senba T."/>
            <person name="Matsumura K."/>
            <person name="Nakajima Y."/>
            <person name="Mizuno T."/>
            <person name="Morinaga M."/>
            <person name="Sasaki M."/>
            <person name="Togashi T."/>
            <person name="Oyama M."/>
            <person name="Hata H."/>
            <person name="Watanabe M."/>
            <person name="Komatsu T."/>
            <person name="Mizushima-Sugano J."/>
            <person name="Satoh T."/>
            <person name="Shirai Y."/>
            <person name="Takahashi Y."/>
            <person name="Nakagawa K."/>
            <person name="Okumura K."/>
            <person name="Nagase T."/>
            <person name="Nomura N."/>
            <person name="Kikuchi H."/>
            <person name="Masuho Y."/>
            <person name="Yamashita R."/>
            <person name="Nakai K."/>
            <person name="Yada T."/>
            <person name="Nakamura Y."/>
            <person name="Ohara O."/>
            <person name="Isogai T."/>
            <person name="Sugano S."/>
        </authorList>
    </citation>
    <scope>NUCLEOTIDE SEQUENCE [LARGE SCALE MRNA]</scope>
    <scope>VARIANT LEU-5</scope>
    <source>
        <tissue>Testis</tissue>
    </source>
</reference>
<reference key="5">
    <citation type="journal article" date="2004" name="Genome Res.">
        <title>The status, quality, and expansion of the NIH full-length cDNA project: the Mammalian Gene Collection (MGC).</title>
        <authorList>
            <consortium name="The MGC Project Team"/>
        </authorList>
    </citation>
    <scope>NUCLEOTIDE SEQUENCE [LARGE SCALE MRNA]</scope>
    <source>
        <tissue>Brain</tissue>
    </source>
</reference>
<reference key="6">
    <citation type="journal article" date="1998" name="Am. J. Hum. Genet.">
        <title>Mutations in the human sterol delta 7-reductase gene at 11q12-13 cause Smith-Lemli-Opitz syndrome.</title>
        <authorList>
            <person name="Wassif C.A."/>
            <person name="Maslen C."/>
            <person name="Kachilele-Linjewile S."/>
            <person name="Lin D."/>
            <person name="Linck L.M."/>
            <person name="Conner W.E."/>
            <person name="Steiner R.D."/>
            <person name="Porter F.D."/>
        </authorList>
    </citation>
    <scope>NUCLEOTIDE SEQUENCE [MRNA] OF 14-475</scope>
    <scope>CATALYTIC ACTIVITY</scope>
    <scope>FUNCTION</scope>
    <source>
        <tissue>Liver</tissue>
    </source>
</reference>
<reference key="7">
    <citation type="journal article" date="2004" name="J. Biol. Chem.">
        <title>Molecular characterization of the microsomal tamoxifen binding site.</title>
        <authorList>
            <person name="Kedjouar B."/>
            <person name="de Medina P."/>
            <person name="Oulad-Abdelghani M."/>
            <person name="Payre B."/>
            <person name="Silvente-Poirot S."/>
            <person name="Favre G."/>
            <person name="Faye J.C."/>
            <person name="Poirot M."/>
        </authorList>
    </citation>
    <scope>FUNCTION</scope>
    <scope>ACTIVITY REGULATION</scope>
</reference>
<reference key="8">
    <citation type="journal article" date="2008" name="Mol. Cell">
        <title>Kinase-selective enrichment enables quantitative phosphoproteomics of the kinome across the cell cycle.</title>
        <authorList>
            <person name="Daub H."/>
            <person name="Olsen J.V."/>
            <person name="Bairlein M."/>
            <person name="Gnad F."/>
            <person name="Oppermann F.S."/>
            <person name="Korner R."/>
            <person name="Greff Z."/>
            <person name="Keri G."/>
            <person name="Stemmann O."/>
            <person name="Mann M."/>
        </authorList>
    </citation>
    <scope>PHOSPHORYLATION [LARGE SCALE ANALYSIS] AT SER-14</scope>
    <scope>IDENTIFICATION BY MASS SPECTROMETRY [LARGE SCALE ANALYSIS]</scope>
    <source>
        <tissue>Cervix carcinoma</tissue>
    </source>
</reference>
<reference key="9">
    <citation type="journal article" date="2009" name="Mol. Cell. Proteomics">
        <title>Large-scale proteomics analysis of the human kinome.</title>
        <authorList>
            <person name="Oppermann F.S."/>
            <person name="Gnad F."/>
            <person name="Olsen J.V."/>
            <person name="Hornberger R."/>
            <person name="Greff Z."/>
            <person name="Keri G."/>
            <person name="Mann M."/>
            <person name="Daub H."/>
        </authorList>
    </citation>
    <scope>PHOSPHORYLATION [LARGE SCALE ANALYSIS] AT SER-14</scope>
    <scope>IDENTIFICATION BY MASS SPECTROMETRY [LARGE SCALE ANALYSIS]</scope>
</reference>
<reference key="10">
    <citation type="journal article" date="2009" name="Sci. Signal.">
        <title>Quantitative phosphoproteomic analysis of T cell receptor signaling reveals system-wide modulation of protein-protein interactions.</title>
        <authorList>
            <person name="Mayya V."/>
            <person name="Lundgren D.H."/>
            <person name="Hwang S.-I."/>
            <person name="Rezaul K."/>
            <person name="Wu L."/>
            <person name="Eng J.K."/>
            <person name="Rodionov V."/>
            <person name="Han D.K."/>
        </authorList>
    </citation>
    <scope>PHOSPHORYLATION [LARGE SCALE ANALYSIS] AT SER-14</scope>
    <scope>IDENTIFICATION BY MASS SPECTROMETRY [LARGE SCALE ANALYSIS]</scope>
    <source>
        <tissue>Leukemic T-cell</tissue>
    </source>
</reference>
<reference key="11">
    <citation type="journal article" date="2010" name="Proc. Natl. Acad. Sci. U.S.A.">
        <title>Identification and pharmacological characterization of cholesterol-5,6-epoxide hydrolase as a target for tamoxifen and AEBS ligands.</title>
        <authorList>
            <person name="de Medina P."/>
            <person name="Paillasse M.R."/>
            <person name="Segala G."/>
            <person name="Poirot M."/>
            <person name="Silvente-Poirot S."/>
        </authorList>
    </citation>
    <scope>FUNCTION</scope>
    <scope>CATALYTIC ACTIVITY</scope>
    <scope>ACTIVITY REGULATION</scope>
    <scope>BIOPHYSICOCHEMICAL PROPERTIES</scope>
</reference>
<reference key="12">
    <citation type="journal article" date="2010" name="Sci. Signal.">
        <title>Quantitative phosphoproteomics reveals widespread full phosphorylation site occupancy during mitosis.</title>
        <authorList>
            <person name="Olsen J.V."/>
            <person name="Vermeulen M."/>
            <person name="Santamaria A."/>
            <person name="Kumar C."/>
            <person name="Miller M.L."/>
            <person name="Jensen L.J."/>
            <person name="Gnad F."/>
            <person name="Cox J."/>
            <person name="Jensen T.S."/>
            <person name="Nigg E.A."/>
            <person name="Brunak S."/>
            <person name="Mann M."/>
        </authorList>
    </citation>
    <scope>PHOSPHORYLATION [LARGE SCALE ANALYSIS] AT SER-14</scope>
    <scope>IDENTIFICATION BY MASS SPECTROMETRY [LARGE SCALE ANALYSIS]</scope>
    <source>
        <tissue>Cervix carcinoma</tissue>
    </source>
</reference>
<reference key="13">
    <citation type="journal article" date="2011" name="BMC Syst. Biol.">
        <title>Initial characterization of the human central proteome.</title>
        <authorList>
            <person name="Burkard T.R."/>
            <person name="Planyavsky M."/>
            <person name="Kaupe I."/>
            <person name="Breitwieser F.P."/>
            <person name="Buerckstuemmer T."/>
            <person name="Bennett K.L."/>
            <person name="Superti-Furga G."/>
            <person name="Colinge J."/>
        </authorList>
    </citation>
    <scope>IDENTIFICATION BY MASS SPECTROMETRY [LARGE SCALE ANALYSIS]</scope>
</reference>
<reference key="14">
    <citation type="journal article" date="2011" name="Sci. Signal.">
        <title>System-wide temporal characterization of the proteome and phosphoproteome of human embryonic stem cell differentiation.</title>
        <authorList>
            <person name="Rigbolt K.T."/>
            <person name="Prokhorova T.A."/>
            <person name="Akimov V."/>
            <person name="Henningsen J."/>
            <person name="Johansen P.T."/>
            <person name="Kratchmarova I."/>
            <person name="Kassem M."/>
            <person name="Mann M."/>
            <person name="Olsen J.V."/>
            <person name="Blagoev B."/>
        </authorList>
    </citation>
    <scope>PHOSPHORYLATION [LARGE SCALE ANALYSIS] AT SER-14</scope>
    <scope>IDENTIFICATION BY MASS SPECTROMETRY [LARGE SCALE ANALYSIS]</scope>
</reference>
<reference key="15">
    <citation type="journal article" date="2012" name="Proc. Natl. Acad. Sci. U.S.A.">
        <title>N-terminal acetylome analyses and functional insights of the N-terminal acetyltransferase NatB.</title>
        <authorList>
            <person name="Van Damme P."/>
            <person name="Lasa M."/>
            <person name="Polevoda B."/>
            <person name="Gazquez C."/>
            <person name="Elosegui-Artola A."/>
            <person name="Kim D.S."/>
            <person name="De Juan-Pardo E."/>
            <person name="Demeyer K."/>
            <person name="Hole K."/>
            <person name="Larrea E."/>
            <person name="Timmerman E."/>
            <person name="Prieto J."/>
            <person name="Arnesen T."/>
            <person name="Sherman F."/>
            <person name="Gevaert K."/>
            <person name="Aldabe R."/>
        </authorList>
    </citation>
    <scope>IDENTIFICATION BY MASS SPECTROMETRY [LARGE SCALE ANALYSIS]</scope>
</reference>
<reference key="16">
    <citation type="journal article" date="2013" name="J. Proteome Res.">
        <title>Toward a comprehensive characterization of a human cancer cell phosphoproteome.</title>
        <authorList>
            <person name="Zhou H."/>
            <person name="Di Palma S."/>
            <person name="Preisinger C."/>
            <person name="Peng M."/>
            <person name="Polat A.N."/>
            <person name="Heck A.J."/>
            <person name="Mohammed S."/>
        </authorList>
    </citation>
    <scope>PHOSPHORYLATION [LARGE SCALE ANALYSIS] AT SER-14</scope>
    <scope>IDENTIFICATION BY MASS SPECTROMETRY [LARGE SCALE ANALYSIS]</scope>
    <source>
        <tissue>Erythroleukemia</tissue>
    </source>
</reference>
<reference key="17">
    <citation type="journal article" date="2014" name="J. Proteomics">
        <title>An enzyme assisted RP-RPLC approach for in-depth analysis of human liver phosphoproteome.</title>
        <authorList>
            <person name="Bian Y."/>
            <person name="Song C."/>
            <person name="Cheng K."/>
            <person name="Dong M."/>
            <person name="Wang F."/>
            <person name="Huang J."/>
            <person name="Sun D."/>
            <person name="Wang L."/>
            <person name="Ye M."/>
            <person name="Zou H."/>
        </authorList>
    </citation>
    <scope>PHOSPHORYLATION [LARGE SCALE ANALYSIS] AT SER-14</scope>
    <scope>IDENTIFICATION BY MASS SPECTROMETRY [LARGE SCALE ANALYSIS]</scope>
    <source>
        <tissue>Liver</tissue>
    </source>
</reference>
<reference key="18">
    <citation type="journal article" date="2015" name="J. Lipid Res.">
        <title>The terminal enzymes of cholesterol synthesis, DHCR24 and DHCR7, interact physically and functionally.</title>
        <authorList>
            <person name="Luu W."/>
            <person name="Hart-Smith G."/>
            <person name="Sharpe L.J."/>
            <person name="Brown A.J."/>
        </authorList>
    </citation>
    <scope>INTERACTION WITH DHCR24</scope>
    <scope>CATALYTIC ACTIVITY</scope>
    <scope>FUNCTION</scope>
</reference>
<reference key="19">
    <citation type="journal article" date="2015" name="Proteomics">
        <title>N-terminome analysis of the human mitochondrial proteome.</title>
        <authorList>
            <person name="Vaca Jacome A.S."/>
            <person name="Rabilloud T."/>
            <person name="Schaeffer-Reiss C."/>
            <person name="Rompais M."/>
            <person name="Ayoub D."/>
            <person name="Lane L."/>
            <person name="Bairoch A."/>
            <person name="Van Dorsselaer A."/>
            <person name="Carapito C."/>
        </authorList>
    </citation>
    <scope>IDENTIFICATION BY MASS SPECTROMETRY [LARGE SCALE ANALYSIS]</scope>
</reference>
<reference key="20">
    <citation type="journal article" date="2020" name="J. Cell Sci.">
        <title>TMEM147 interacts with lamin B receptor, regulates its localization and levels, and affects cholesterol homeostasis.</title>
        <authorList>
            <person name="Christodoulou A."/>
            <person name="Maimaris G."/>
            <person name="Makrigiorgi A."/>
            <person name="Charidemou E."/>
            <person name="Luechtenborg C."/>
            <person name="Ververis A."/>
            <person name="Georgiou R."/>
            <person name="Lederer C.W."/>
            <person name="Haffner C."/>
            <person name="Bruegger B."/>
            <person name="Santama N."/>
        </authorList>
    </citation>
    <scope>INTERACTION WITH TMEM147</scope>
</reference>
<reference key="21">
    <citation type="journal article" date="2024" name="Nature">
        <title>7-Dehydrocholesterol is an endogenous suppressor of ferroptosis.</title>
        <authorList>
            <person name="Freitas F.P."/>
            <person name="Alborzinia H."/>
            <person name="Dos Santos A.F."/>
            <person name="Nepachalovich P."/>
            <person name="Pedrera L."/>
            <person name="Zilka O."/>
            <person name="Inague A."/>
            <person name="Klein C."/>
            <person name="Aroua N."/>
            <person name="Kaushal K."/>
            <person name="Kast B."/>
            <person name="Lorenz S.M."/>
            <person name="Kunz V."/>
            <person name="Nehring H."/>
            <person name="Xavier da Silva T.N."/>
            <person name="Chen Z."/>
            <person name="Atici S."/>
            <person name="Doll S.G."/>
            <person name="Schaefer E.L."/>
            <person name="Ekpo I."/>
            <person name="Schmitz W."/>
            <person name="Horling A."/>
            <person name="Imming P."/>
            <person name="Miyamoto S."/>
            <person name="Wehman A.M."/>
            <person name="Genaro-Mattos T.C."/>
            <person name="Mirnics K."/>
            <person name="Kumar L."/>
            <person name="Klein-Seetharaman J."/>
            <person name="Meierjohann S."/>
            <person name="Weigand I."/>
            <person name="Kroiss M."/>
            <person name="Bornkamm G.W."/>
            <person name="Gomes F."/>
            <person name="Netto L.E.S."/>
            <person name="Sathian M.B."/>
            <person name="Konrad D.B."/>
            <person name="Covey D.F."/>
            <person name="Michalke B."/>
            <person name="Bommert K."/>
            <person name="Bargou R.C."/>
            <person name="Garcia-Saez A."/>
            <person name="Pratt D.A."/>
            <person name="Fedorova M."/>
            <person name="Trumpp A."/>
            <person name="Conrad M."/>
            <person name="Friedmann Angeli J.P."/>
        </authorList>
    </citation>
    <scope>FUNCTION</scope>
    <scope>CATALYTIC ACTIVITY</scope>
    <scope>MUTAGENESIS OF ALA-24; ASN-274; LEU-306 AND LEU-317</scope>
    <scope>CHARACTERIZATION OF VARIANTS SLOS MET-93 AND LYS-448</scope>
</reference>
<reference key="22">
    <citation type="journal article" date="2024" name="Nature">
        <title>7-Dehydrocholesterol dictates ferroptosis sensitivity.</title>
        <authorList>
            <person name="Li Y."/>
            <person name="Ran Q."/>
            <person name="Duan Q."/>
            <person name="Jin J."/>
            <person name="Wang Y."/>
            <person name="Yu L."/>
            <person name="Wang C."/>
            <person name="Zhu Z."/>
            <person name="Chen X."/>
            <person name="Weng L."/>
            <person name="Li Z."/>
            <person name="Wang J."/>
            <person name="Wu Q."/>
            <person name="Wang H."/>
            <person name="Tian H."/>
            <person name="Song S."/>
            <person name="Shan Z."/>
            <person name="Zhai Q."/>
            <person name="Qin H."/>
            <person name="Chen S."/>
            <person name="Fang L."/>
            <person name="Yin H."/>
            <person name="Zhou H."/>
            <person name="Jiang X."/>
            <person name="Wang P."/>
        </authorList>
    </citation>
    <scope>FUNCTION</scope>
    <scope>CATALYTIC ACTIVITY</scope>
</reference>
<reference key="23">
    <citation type="journal article" date="1998" name="Proc. Natl. Acad. Sci. U.S.A.">
        <title>Mutations in the delta7-sterol reductase gene in patients with the Smith-Lemli-Opitz syndrome.</title>
        <authorList>
            <person name="Fitzky B.U."/>
            <person name="Witsch-Baumgartner M."/>
            <person name="Erdel M."/>
            <person name="Lee J.N."/>
            <person name="Paik Y.-K."/>
            <person name="Glossmann H."/>
            <person name="Utermann G."/>
            <person name="Moebius F.F."/>
        </authorList>
    </citation>
    <scope>VARIANTS SLOS SER-51; MET-93; PRO-99; PRO-157; VAL-247; LEU-326; TRP-352; SER-380; CYS-404 AND SER-410</scope>
</reference>
<reference key="24">
    <citation type="journal article" date="2000" name="Am. J. Hum. Genet.">
        <title>Mutational spectrum in the Delta7-sterol reductase gene and genotype-phenotype correlation in 84 patients with Smith-Lemli-Opitz syndrome.</title>
        <authorList>
            <person name="Witsch-Baumgartner M."/>
            <person name="Fitzky B.U."/>
            <person name="Ogorelkova M."/>
            <person name="Kraft H.G."/>
            <person name="Moebius F.F."/>
            <person name="Glossmann H."/>
            <person name="Seedorf U."/>
            <person name="Gillessen-Kaesbach G."/>
            <person name="Hoffmann G.F."/>
            <person name="Clayton P."/>
            <person name="Kelley R.I."/>
            <person name="Utermann G."/>
        </authorList>
    </citation>
    <scope>VARIANTS SLOS SER-51; MET-93; PRO-99; HIS-107; PRO-109; ASP-147; MET-154; PRO-157; LEU-169; CYS-182; CYS-242; VAL-247; MET-281; ILE-289; GLY-311; TYR-311; HIS-324; LEU-326; GLN-352; TRP-352; ALA-353; CYS-362; TYR-380; ARG-380; SER-380; LEU-397; CYS-404; SER-404; HIS-408; SER-410; ARG-410; CYS-443; GLN-446; GLN-448; LYS-448 AND LEU-450</scope>
</reference>
<reference key="25">
    <citation type="journal article" date="2000" name="Am. J. Med. Genet.">
        <title>Mutation analysis and description of sixteen RSH/Smith-Lemli-Opitz syndrome patients: polymerase chain reaction-based assays to simplify genotyping.</title>
        <authorList>
            <person name="Krakowiak P.A."/>
            <person name="Nwokoro N.A."/>
            <person name="Wassif C.A."/>
            <person name="Battaile K.P."/>
            <person name="Nowaczyk M.J.M."/>
            <person name="Connor W.E."/>
            <person name="Maslen C."/>
            <person name="Steiner R.D."/>
            <person name="Porter F.D."/>
        </authorList>
    </citation>
    <scope>VARIANT SLOS ILE-289</scope>
</reference>
<reference key="26">
    <citation type="journal article" date="2001" name="Ann. Hum. Genet.">
        <title>Novel mutations in the 7-dehydrocholesterol reductase gene of 13 patients with Smith-Lemli-Opitz syndrome.</title>
        <authorList>
            <person name="Jira P.E."/>
            <person name="Wanders R.J.A."/>
            <person name="Smeitink J.A.M."/>
            <person name="De Jong J."/>
            <person name="Wevers R.A."/>
            <person name="Oostheim W."/>
            <person name="Tuerlings J.H.A.M."/>
            <person name="Hennekam R.C.M."/>
            <person name="Sengers R.C.A."/>
            <person name="Waterham H.R."/>
        </authorList>
    </citation>
    <scope>VARIANTS SLOS MET-93; PRO-109; LEU-119; MET-154; LEU-182; TYR-183; GLU-198; HIS-242; ARG-244; CYS-248 AND LEU-255</scope>
</reference>
<reference key="27">
    <citation type="journal article" date="2001" name="Eur. J. Hum. Genet.">
        <title>Frequency gradients of DHCR7 mutations in patients with Smith-Lemli-Opitz syndrome in Europe: evidence for different origins of common mutations.</title>
        <authorList>
            <person name="Witsch-Baumgartner M."/>
            <person name="Ciara E."/>
            <person name="Loffler J."/>
            <person name="Menzel H.J."/>
            <person name="Seedorf U."/>
            <person name="Burn J."/>
            <person name="Gillessen-Kaesbach G."/>
            <person name="Hoffmann G.F."/>
            <person name="Fitzky B.U."/>
            <person name="Mundy H."/>
            <person name="Clayton P."/>
            <person name="Kelley R.I."/>
            <person name="Krajewska-Walasek M."/>
            <person name="Utermann G."/>
        </authorList>
    </citation>
    <scope>VARIANTS SLOS MET-93; LEU-326; TRP-352 AND CYS-404</scope>
</reference>
<reference key="28">
    <citation type="journal article" date="2003" name="Am. J. Med. Genet. A">
        <title>Identification of three patients with a very mild form of Smith-Lemli-Opitz syndrome.</title>
        <authorList>
            <person name="Langius F.A."/>
            <person name="Waterham H.R."/>
            <person name="Romeijn G.J."/>
            <person name="Oostheim W."/>
            <person name="de Barse M.M."/>
            <person name="Dorland L."/>
            <person name="Duran M."/>
            <person name="Beemer F.A."/>
            <person name="Wanders R.J."/>
            <person name="Poll-The B.T."/>
        </authorList>
    </citation>
    <scope>VARIANT SLOS LYS-448</scope>
</reference>
<reference key="29">
    <citation type="journal article" date="2005" name="Hum. Mutat.">
        <title>Identification of nine novel DHCR7 missense mutations in patients with Smith-Lemli-Opitz syndrome (SLOS).</title>
        <authorList>
            <person name="Waye J.S."/>
            <person name="Krakowiak P.A."/>
            <person name="Wassif C.A."/>
            <person name="Sterner A.L."/>
            <person name="Eng B."/>
            <person name="Nakamura L.M."/>
            <person name="Nowaczyk M.J.M."/>
            <person name="Porter F.D."/>
        </authorList>
    </citation>
    <scope>VARIANTS SLOS PRO-68; CYS-113; VAL-138; LEU-145; SER-235; CYS-242; THR-297; ARG-344; CYS-404; TYR-405; HIS-408 AND PRO-426</scope>
</reference>
<reference key="30">
    <citation type="journal article" date="2015" name="Proc. Natl. Acad. Sci. U.S.A.">
        <title>Neomorphic effects of recurrent somatic mutations in Yin Yang 1 in insulin-producing adenomas.</title>
        <authorList>
            <person name="Cromer M.K."/>
            <person name="Choi M."/>
            <person name="Nelson-Williams C."/>
            <person name="Fonseca A.L."/>
            <person name="Kunstman J.W."/>
            <person name="Korah R.M."/>
            <person name="Overton J.D."/>
            <person name="Mane S."/>
            <person name="Kenney B."/>
            <person name="Malchoff C.D."/>
            <person name="Stalberg P."/>
            <person name="Akerstroem G."/>
            <person name="Westin G."/>
            <person name="Hellman P."/>
            <person name="Carling T."/>
            <person name="Bjoerklund P."/>
            <person name="Lifton R.P."/>
        </authorList>
    </citation>
    <scope>VARIANT ARG-118</scope>
</reference>
<organism>
    <name type="scientific">Homo sapiens</name>
    <name type="common">Human</name>
    <dbReference type="NCBI Taxonomy" id="9606"/>
    <lineage>
        <taxon>Eukaryota</taxon>
        <taxon>Metazoa</taxon>
        <taxon>Chordata</taxon>
        <taxon>Craniata</taxon>
        <taxon>Vertebrata</taxon>
        <taxon>Euteleostomi</taxon>
        <taxon>Mammalia</taxon>
        <taxon>Eutheria</taxon>
        <taxon>Euarchontoglires</taxon>
        <taxon>Primates</taxon>
        <taxon>Haplorrhini</taxon>
        <taxon>Catarrhini</taxon>
        <taxon>Hominidae</taxon>
        <taxon>Homo</taxon>
    </lineage>
</organism>
<proteinExistence type="evidence at protein level"/>
<feature type="chain" id="PRO_0000207502" description="7-dehydrocholesterol reductase">
    <location>
        <begin position="1"/>
        <end position="475"/>
    </location>
</feature>
<feature type="transmembrane region" description="Helical" evidence="3">
    <location>
        <begin position="40"/>
        <end position="60"/>
    </location>
</feature>
<feature type="transmembrane region" description="Helical" evidence="3">
    <location>
        <begin position="154"/>
        <end position="174"/>
    </location>
</feature>
<feature type="transmembrane region" description="Helical" evidence="3">
    <location>
        <begin position="177"/>
        <end position="197"/>
    </location>
</feature>
<feature type="transmembrane region" description="Helical" evidence="3">
    <location>
        <begin position="266"/>
        <end position="286"/>
    </location>
</feature>
<feature type="transmembrane region" description="Helical" evidence="3">
    <location>
        <begin position="306"/>
        <end position="326"/>
    </location>
</feature>
<feature type="transmembrane region" description="Helical" evidence="3">
    <location>
        <begin position="331"/>
        <end position="351"/>
    </location>
</feature>
<feature type="transmembrane region" description="Helical" evidence="3">
    <location>
        <begin position="420"/>
        <end position="440"/>
    </location>
</feature>
<feature type="region of interest" description="Disordered" evidence="4">
    <location>
        <begin position="1"/>
        <end position="21"/>
    </location>
</feature>
<feature type="binding site" evidence="1">
    <location>
        <position position="358"/>
    </location>
    <ligand>
        <name>NADP(+)</name>
        <dbReference type="ChEBI" id="CHEBI:58349"/>
    </ligand>
</feature>
<feature type="binding site" evidence="1">
    <location>
        <position position="362"/>
    </location>
    <ligand>
        <name>NADP(+)</name>
        <dbReference type="ChEBI" id="CHEBI:58349"/>
    </ligand>
</feature>
<feature type="binding site" evidence="1">
    <location>
        <position position="395"/>
    </location>
    <ligand>
        <name>NADP(+)</name>
        <dbReference type="ChEBI" id="CHEBI:58349"/>
    </ligand>
</feature>
<feature type="binding site" evidence="1">
    <location>
        <position position="400"/>
    </location>
    <ligand>
        <name>NADP(+)</name>
        <dbReference type="ChEBI" id="CHEBI:58349"/>
    </ligand>
</feature>
<feature type="binding site" evidence="1">
    <location>
        <begin position="407"/>
        <end position="408"/>
    </location>
    <ligand>
        <name>NADP(+)</name>
        <dbReference type="ChEBI" id="CHEBI:58349"/>
    </ligand>
</feature>
<feature type="binding site" evidence="1">
    <location>
        <position position="447"/>
    </location>
    <ligand>
        <name>NADP(+)</name>
        <dbReference type="ChEBI" id="CHEBI:58349"/>
    </ligand>
</feature>
<feature type="binding site" evidence="1">
    <location>
        <begin position="451"/>
        <end position="455"/>
    </location>
    <ligand>
        <name>NADP(+)</name>
        <dbReference type="ChEBI" id="CHEBI:58349"/>
    </ligand>
</feature>
<feature type="binding site" evidence="1">
    <location>
        <position position="462"/>
    </location>
    <ligand>
        <name>NADP(+)</name>
        <dbReference type="ChEBI" id="CHEBI:58349"/>
    </ligand>
</feature>
<feature type="modified residue" description="Phosphoserine" evidence="30 31 32 33 34 35 36">
    <location>
        <position position="14"/>
    </location>
</feature>
<feature type="sequence variant" id="VAR_067456" description="In dbSNP:rs1127869." evidence="10 18">
    <original>S</original>
    <variation>L</variation>
    <location>
        <position position="5"/>
    </location>
</feature>
<feature type="sequence variant" id="VAR_012717" description="In SLOS; dbSNP:rs104886035." evidence="5 20">
    <original>P</original>
    <variation>S</variation>
    <location>
        <position position="51"/>
    </location>
</feature>
<feature type="sequence variant" id="VAR_023148" description="In SLOS; dbSNP:rs104886038." evidence="12">
    <original>L</original>
    <variation>P</variation>
    <location>
        <position position="68"/>
    </location>
</feature>
<feature type="sequence variant" id="VAR_012718" description="In SLOS; loss of 7-dehydrocholesterol reductase activity; dbSNP:rs80338853." evidence="5 7 8 16 20">
    <original>T</original>
    <variation>M</variation>
    <location>
        <position position="93"/>
    </location>
</feature>
<feature type="sequence variant" id="VAR_012719" description="In SLOS; dbSNP:rs104886041." evidence="5 20">
    <original>L</original>
    <variation>P</variation>
    <location>
        <position position="99"/>
    </location>
</feature>
<feature type="sequence variant" id="VAR_023149" description="In SLOS; dbSNP:rs104886040." evidence="5">
    <original>Q</original>
    <variation>H</variation>
    <location>
        <position position="107"/>
    </location>
</feature>
<feature type="sequence variant" id="VAR_023150" description="In SLOS; dbSNP:rs121912195." evidence="5 8">
    <original>L</original>
    <variation>P</variation>
    <location>
        <position position="109"/>
    </location>
</feature>
<feature type="sequence variant" id="VAR_023151" description="In SLOS." evidence="12">
    <original>S</original>
    <variation>C</variation>
    <location>
        <position position="113"/>
    </location>
</feature>
<feature type="sequence variant" id="VAR_074180" evidence="15">
    <original>C</original>
    <variation>R</variation>
    <location>
        <position position="118"/>
    </location>
</feature>
<feature type="sequence variant" id="VAR_012720" description="In SLOS; dbSNP:rs28938174." evidence="8 21">
    <original>H</original>
    <variation>L</variation>
    <location>
        <position position="119"/>
    </location>
</feature>
<feature type="sequence variant" id="VAR_023152" description="In SLOS." evidence="12">
    <original>G</original>
    <variation>V</variation>
    <location>
        <position position="138"/>
    </location>
</feature>
<feature type="sequence variant" id="VAR_023153" description="In SLOS; dbSNP:rs1555146475." evidence="12">
    <original>I</original>
    <variation>L</variation>
    <location>
        <position position="145"/>
    </location>
</feature>
<feature type="sequence variant" id="VAR_023154" description="In SLOS; dbSNP:rs777425801." evidence="5">
    <original>G</original>
    <variation>D</variation>
    <location>
        <position position="147"/>
    </location>
</feature>
<feature type="sequence variant" id="VAR_023155" description="In SLOS; dbSNP:rs143312232." evidence="5 8">
    <original>T</original>
    <variation>M</variation>
    <location>
        <position position="154"/>
    </location>
</feature>
<feature type="sequence variant" id="VAR_012721" description="In SLOS; dbSNP:rs753960624." evidence="5 20">
    <original>L</original>
    <variation>P</variation>
    <location>
        <position position="157"/>
    </location>
</feature>
<feature type="sequence variant" id="VAR_023156" description="In SLOS; dbSNP:rs80338855." evidence="5">
    <original>S</original>
    <variation>L</variation>
    <location>
        <position position="169"/>
    </location>
</feature>
<feature type="sequence variant" id="VAR_023157" description="In SLOS." evidence="5">
    <original>W</original>
    <variation>C</variation>
    <location>
        <position position="182"/>
    </location>
</feature>
<feature type="sequence variant" id="VAR_023158" description="In SLOS; dbSNP:rs536394774." evidence="8">
    <original>W</original>
    <variation>L</variation>
    <location>
        <position position="182"/>
    </location>
</feature>
<feature type="sequence variant" id="VAR_023159" description="In SLOS." evidence="8">
    <original>C</original>
    <variation>Y</variation>
    <location>
        <position position="183"/>
    </location>
</feature>
<feature type="sequence variant" id="VAR_023160" description="In SLOS." evidence="8">
    <original>K</original>
    <variation>E</variation>
    <location>
        <position position="198"/>
    </location>
</feature>
<feature type="sequence variant" id="VAR_023161" description="In SLOS; dbSNP:rs1555146061." evidence="12">
    <original>F</original>
    <variation>S</variation>
    <location>
        <position position="235"/>
    </location>
</feature>
<feature type="sequence variant" id="VAR_023162" description="In SLOS; dbSNP:rs80338856." evidence="5 12">
    <original>R</original>
    <variation>C</variation>
    <location>
        <position position="242"/>
    </location>
</feature>
<feature type="sequence variant" id="VAR_023163" description="In SLOS; dbSNP:rs80338857." evidence="8">
    <original>R</original>
    <variation>H</variation>
    <location>
        <position position="242"/>
    </location>
</feature>
<feature type="sequence variant" id="VAR_012722" description="In SLOS; dbSNP:rs121909764." evidence="8 21">
    <original>G</original>
    <variation>R</variation>
    <location>
        <position position="244"/>
    </location>
</feature>
<feature type="sequence variant" id="VAR_012723" description="In SLOS; dbSNP:rs886041354." evidence="5 20">
    <original>A</original>
    <variation>V</variation>
    <location>
        <position position="247"/>
    </location>
</feature>
<feature type="sequence variant" id="VAR_012724" description="In SLOS; dbSNP:rs104894212." evidence="8 21">
    <original>W</original>
    <variation>C</variation>
    <location>
        <position position="248"/>
    </location>
</feature>
<feature type="sequence variant" id="VAR_023164" description="In SLOS." evidence="8">
    <original>F</original>
    <variation>L</variation>
    <location>
        <position position="255"/>
    </location>
</feature>
<feature type="sequence variant" id="VAR_023165" description="In SLOS; dbSNP:rs398123607." evidence="5">
    <original>V</original>
    <variation>M</variation>
    <location>
        <position position="281"/>
    </location>
</feature>
<feature type="sequence variant" id="VAR_012725" description="In SLOS; dbSNP:rs121909765." evidence="5 6">
    <original>T</original>
    <variation>I</variation>
    <location>
        <position position="289"/>
    </location>
</feature>
<feature type="sequence variant" id="VAR_023166" description="In SLOS." evidence="12">
    <original>I</original>
    <variation>T</variation>
    <location>
        <position position="297"/>
    </location>
</feature>
<feature type="sequence variant" id="VAR_023167" description="In SLOS." evidence="5">
    <original>C</original>
    <variation>G</variation>
    <location>
        <position position="311"/>
    </location>
</feature>
<feature type="sequence variant" id="VAR_023168" description="In SLOS." evidence="5">
    <original>C</original>
    <variation>Y</variation>
    <location>
        <position position="311"/>
    </location>
</feature>
<feature type="sequence variant" id="VAR_023169" description="In SLOS; dbSNP:rs1173707321." evidence="5">
    <original>Y</original>
    <variation>H</variation>
    <location>
        <position position="324"/>
    </location>
</feature>
<feature type="sequence variant" id="VAR_012726" description="In SLOS; dbSNP:rs80338859." evidence="5 7 20">
    <original>V</original>
    <variation>L</variation>
    <location>
        <position position="326"/>
    </location>
</feature>
<feature type="sequence variant" id="VAR_023170" description="In SLOS." evidence="12">
    <original>G</original>
    <variation>R</variation>
    <location>
        <position position="344"/>
    </location>
</feature>
<feature type="sequence variant" id="VAR_023171" description="In SLOS; dbSNP:rs121909768." evidence="5">
    <original>R</original>
    <variation>Q</variation>
    <location>
        <position position="352"/>
    </location>
</feature>
<feature type="sequence variant" id="VAR_012727" description="In SLOS; dbSNP:rs80338860." evidence="5 7 20">
    <original>R</original>
    <variation>W</variation>
    <location>
        <position position="352"/>
    </location>
</feature>
<feature type="sequence variant" id="VAR_023172" description="In SLOS." evidence="5">
    <original>V</original>
    <variation>A</variation>
    <location>
        <position position="353"/>
    </location>
</feature>
<feature type="sequence variant" id="VAR_023173" description="In SLOS; dbSNP:rs371302153." evidence="5">
    <original>R</original>
    <variation>C</variation>
    <location>
        <position position="362"/>
    </location>
</feature>
<feature type="sequence variant" id="VAR_023174" description="In SLOS; dbSNP:rs373306653." evidence="5">
    <original>C</original>
    <variation>R</variation>
    <location>
        <position position="380"/>
    </location>
</feature>
<feature type="sequence variant" id="VAR_012728" description="In SLOS." evidence="5 20">
    <original>C</original>
    <variation>S</variation>
    <location>
        <position position="380"/>
    </location>
</feature>
<feature type="sequence variant" id="VAR_023175" description="In SLOS; dbSNP:rs779709646." evidence="5">
    <original>C</original>
    <variation>Y</variation>
    <location>
        <position position="380"/>
    </location>
</feature>
<feature type="sequence variant" id="VAR_023176" description="In SLOS; dbSNP:rs773134475." evidence="5">
    <original>S</original>
    <variation>L</variation>
    <location>
        <position position="397"/>
    </location>
</feature>
<feature type="sequence variant" id="VAR_012729" description="In SLOS; dbSNP:rs61757582." evidence="5 7 12 20">
    <original>R</original>
    <variation>C</variation>
    <location>
        <position position="404"/>
    </location>
</feature>
<feature type="sequence variant" id="VAR_023177" description="In SLOS; dbSNP:rs61757582." evidence="5">
    <original>R</original>
    <variation>S</variation>
    <location>
        <position position="404"/>
    </location>
</feature>
<feature type="sequence variant" id="VAR_023178" description="In SLOS." evidence="12">
    <original>H</original>
    <variation>Y</variation>
    <location>
        <position position="405"/>
    </location>
</feature>
<feature type="sequence variant" id="VAR_023179" description="In SLOS; dbSNP:rs1046560765." evidence="5 12">
    <original>Y</original>
    <variation>H</variation>
    <location>
        <position position="408"/>
    </location>
</feature>
<feature type="sequence variant" id="VAR_023180" description="In SLOS; dbSNP:rs80338862." evidence="5">
    <original>G</original>
    <variation>R</variation>
    <location>
        <position position="410"/>
    </location>
</feature>
<feature type="sequence variant" id="VAR_012730" description="In SLOS; dbSNP:rs80338862." evidence="5 20">
    <original>G</original>
    <variation>S</variation>
    <location>
        <position position="410"/>
    </location>
</feature>
<feature type="sequence variant" id="VAR_052154" description="In dbSNP:rs760242.">
    <original>G</original>
    <variation>S</variation>
    <location>
        <position position="425"/>
    </location>
</feature>
<feature type="sequence variant" id="VAR_023181" description="In SLOS; dbSNP:rs1354718634." evidence="12">
    <original>H</original>
    <variation>P</variation>
    <location>
        <position position="426"/>
    </location>
</feature>
<feature type="sequence variant" id="VAR_023182" description="In SLOS; dbSNP:rs535561852." evidence="5">
    <original>R</original>
    <variation>C</variation>
    <location>
        <position position="443"/>
    </location>
</feature>
<feature type="sequence variant" id="VAR_023183" description="In SLOS; dbSNP:rs751604696." evidence="5">
    <original>R</original>
    <variation>Q</variation>
    <location>
        <position position="446"/>
    </location>
</feature>
<feature type="sequence variant" id="VAR_016975" description="In SLOS; mild; decreased 7-dehydrocholesterol reductase activity; dbSNP:rs80338864." evidence="5 9 16">
    <original>E</original>
    <variation>K</variation>
    <location>
        <position position="448"/>
    </location>
</feature>
<feature type="sequence variant" id="VAR_023184" description="In SLOS; dbSNP:rs80338864." evidence="5">
    <original>E</original>
    <variation>Q</variation>
    <location>
        <position position="448"/>
    </location>
</feature>
<feature type="sequence variant" id="VAR_023185" description="In SLOS; dbSNP:rs542266962." evidence="5">
    <original>R</original>
    <variation>L</variation>
    <location>
        <position position="450"/>
    </location>
</feature>
<feature type="mutagenesis site" description="No effect on 7-dehydrocholesterol reductase activity." evidence="16">
    <original>A</original>
    <variation>S</variation>
    <location>
        <position position="24"/>
    </location>
</feature>
<feature type="mutagenesis site" description="Loss of 7-dehydrocholesterol reductase activity." evidence="16">
    <original>N</original>
    <variation>K</variation>
    <location>
        <position position="274"/>
    </location>
</feature>
<feature type="mutagenesis site" description="Loss of 7-dehydrocholesterol reductase activity." evidence="16">
    <original>L</original>
    <variation>R</variation>
    <location>
        <position position="306"/>
    </location>
</feature>
<feature type="mutagenesis site" description="No effect on 7-dehydrocholesterol reductase activity." evidence="16">
    <original>L</original>
    <variation>V</variation>
    <location>
        <position position="317"/>
    </location>
</feature>
<feature type="sequence conflict" description="In Ref. 6; AAC18345." evidence="26" ref="6">
    <original>S</original>
    <variation>A</variation>
    <location>
        <position position="14"/>
    </location>
</feature>
<keyword id="KW-0152">Cholesterol biosynthesis</keyword>
<keyword id="KW-0153">Cholesterol metabolism</keyword>
<keyword id="KW-0225">Disease variant</keyword>
<keyword id="KW-0256">Endoplasmic reticulum</keyword>
<keyword id="KW-0378">Hydrolase</keyword>
<keyword id="KW-0444">Lipid biosynthesis</keyword>
<keyword id="KW-0443">Lipid metabolism</keyword>
<keyword id="KW-0472">Membrane</keyword>
<keyword id="KW-0521">NADP</keyword>
<keyword id="KW-0560">Oxidoreductase</keyword>
<keyword id="KW-0597">Phosphoprotein</keyword>
<keyword id="KW-1267">Proteomics identification</keyword>
<keyword id="KW-1185">Reference proteome</keyword>
<keyword id="KW-0752">Steroid biosynthesis</keyword>
<keyword id="KW-0753">Steroid metabolism</keyword>
<keyword id="KW-0756">Sterol biosynthesis</keyword>
<keyword id="KW-1207">Sterol metabolism</keyword>
<keyword id="KW-0812">Transmembrane</keyword>
<keyword id="KW-1133">Transmembrane helix</keyword>
<sequence length="475" mass="54489">MAAKSQPNIPKAKSLDGVTNDRTASQGQWGRAWEVDWFSLASVIFLLLFAPFIVYYFIMACDQYSCALTGPVVDIVTGHARLSDIWAKTPPITRKAAQLYTLWVTFQVLLYTSLPDFCHKFLPGYVGGIQEGAVTPAGVVNKYQINGLQAWLLTHLLWFANAHLLSWFSPTIIFDNWIPLLWCANILGYAVSTFAMVKGYFFPTSARDCKFTGNFFYNYMMGIEFNPRIGKWFDFKLFFNGRPGIVAWTLINLSFAAKQRELHSHVTNAMVLVNVLQAIYVIDFFWNETWYLKTIDICHDHFGWYLGWGDCVWLPYLYTLQGLYLVYHPVQLSTPHAVGVLLLGLVGYYIFRVANHQKDLFRRTDGRCLIWGRKPKVIECSYTSADGQRHHSKLLVSGFWGVARHFNYVGDLMGSLAYCLACGGGHLLPYFYIIYMAILLTHRCLRDEHRCASKYGRDWERYTAAVPYRLLPGIF</sequence>
<comment type="function">
    <text evidence="2 14 16 17 18 19">Oxidoreductase that catalyzes the last step of the cholesterol synthesis pathway, which transforms cholesta-5,7-dien-3beta-ol (7-dehydrocholesterol,7-DHC) into cholesterol by reducing the C7-C8 double bond of its sterol core (PubMed:25637936, PubMed:38297129, PubMed:38297130, PubMed:9465114, PubMed:9634533). Can also metabolize cholesta-5,7,24-trien-3beta-ol (7-dehydrodemosterol, 7-DHD) to desmosterol, which is then metabolized by the Delta(24)-sterol reductase (DHCR24) to cholesterol (By similarity). Modulates ferroptosis (a form of regulated cell death driven by iron-dependent lipid peroxidation) through the metabolic breakdown of the anti-ferroptotic metabolites 7-DHC and 7-DHD which, when accumulated, divert the propagation of peroxyl radical-mediated damage from phospholipid components to its sterol core, protecting plasma and mitochondrial membranes from phospholipid autoxidation (PubMed:38297129, PubMed:38297130).</text>
</comment>
<comment type="function">
    <text evidence="11 13">Component of the microsomal antiestrogen binding site (AEBS), a multiproteic complex at the ER membrane that consists of an association between cholestenol Delta-isomerase/EBP and DHCR7 (PubMed:15175332, PubMed:20615952). This complex is responsible for cholesterol-5,6-epoxide hydrolase (ChEH) activity, which consists in the hydration of cholesterol-5,6-epoxides (5,6-EC) into cholestane-3beta,5alpha,6beta-triol (CT) (PubMed:20615952). The precise role of each component of this complex has not been described yet (PubMed:20615952).</text>
</comment>
<comment type="catalytic activity">
    <reaction evidence="14 16 17 18 19">
        <text>cholesterol + NADP(+) = 7-dehydrocholesterol + NADPH + H(+)</text>
        <dbReference type="Rhea" id="RHEA:23984"/>
        <dbReference type="ChEBI" id="CHEBI:15378"/>
        <dbReference type="ChEBI" id="CHEBI:16113"/>
        <dbReference type="ChEBI" id="CHEBI:17759"/>
        <dbReference type="ChEBI" id="CHEBI:57783"/>
        <dbReference type="ChEBI" id="CHEBI:58349"/>
        <dbReference type="EC" id="1.3.1.21"/>
    </reaction>
    <physiologicalReaction direction="right-to-left" evidence="16 17 28">
        <dbReference type="Rhea" id="RHEA:23986"/>
    </physiologicalReaction>
</comment>
<comment type="catalytic activity">
    <reaction evidence="2">
        <text>7-dehydrodesmosterol + NADPH + H(+) = desmosterol + NADP(+)</text>
        <dbReference type="Rhea" id="RHEA:46740"/>
        <dbReference type="ChEBI" id="CHEBI:15378"/>
        <dbReference type="ChEBI" id="CHEBI:17737"/>
        <dbReference type="ChEBI" id="CHEBI:27910"/>
        <dbReference type="ChEBI" id="CHEBI:57783"/>
        <dbReference type="ChEBI" id="CHEBI:58349"/>
    </reaction>
    <physiologicalReaction direction="left-to-right" evidence="2">
        <dbReference type="Rhea" id="RHEA:46741"/>
    </physiologicalReaction>
</comment>
<comment type="catalytic activity">
    <reaction evidence="13">
        <text>5,6alpha-epoxy-5alpha-cholestan-3beta-ol + H2O = 5alpha-cholestane-3beta,5,6beta-triol</text>
        <dbReference type="Rhea" id="RHEA:11964"/>
        <dbReference type="ChEBI" id="CHEBI:15377"/>
        <dbReference type="ChEBI" id="CHEBI:28082"/>
        <dbReference type="ChEBI" id="CHEBI:49305"/>
        <dbReference type="EC" id="3.3.2.11"/>
    </reaction>
    <physiologicalReaction direction="left-to-right" evidence="27">
        <dbReference type="Rhea" id="RHEA:11965"/>
    </physiologicalReaction>
</comment>
<comment type="catalytic activity">
    <reaction evidence="13">
        <text>5,6beta-epoxy-5beta-cholestan-3beta-ol + H2O = 5alpha-cholestane-3beta,5,6beta-triol</text>
        <dbReference type="Rhea" id="RHEA:15113"/>
        <dbReference type="ChEBI" id="CHEBI:15377"/>
        <dbReference type="ChEBI" id="CHEBI:28082"/>
        <dbReference type="ChEBI" id="CHEBI:28164"/>
        <dbReference type="EC" id="3.3.2.11"/>
    </reaction>
    <physiologicalReaction direction="left-to-right" evidence="27">
        <dbReference type="Rhea" id="RHEA:15114"/>
    </physiologicalReaction>
</comment>
<comment type="activity regulation">
    <text evidence="11 13">7-DHC reductase and cholesterol-5,6-epoxide hydrolase (ChEH) activities are inhibited by tamoxifen and the selective AEBS ligand (4-benzyl-phenoxy)-ethyl-N-pyrrolidine (PBPE) (PubMed:15175332, PubMed:20615952). ChEH activity is inhibited by oleic acid (PubMed:20615952).</text>
</comment>
<comment type="biophysicochemical properties">
    <kinetics>
        <KM evidence="13">4.47 uM for 5,6alpha-epoxy-5alpha-cholestan-3beta-ol (in the AEBS complex assay)</KM>
        <Vmax evidence="13">0.46 nmol/min/mg enzyme with 5,6alpha-epoxy-5alpha-cholestan-3beta-ol as substrate, for the formation of CT (in the AEBS complex assay)</Vmax>
    </kinetics>
</comment>
<comment type="pathway">
    <text evidence="14 19">Steroid biosynthesis; cholesterol biosynthesis.</text>
</comment>
<comment type="subunit">
    <text evidence="14">Interacts with DHCR24; this interaction regulates DHCR7 activity (PubMed:25637936). Interacts with TMEM147 (PubMed:25637936).</text>
</comment>
<comment type="subcellular location">
    <subcellularLocation>
        <location evidence="22">Endoplasmic reticulum membrane</location>
        <topology evidence="3">Multi-pass membrane protein</topology>
    </subcellularLocation>
</comment>
<comment type="tissue specificity">
    <text evidence="18 22">Widely expressed. Most abundant in adrenal gland, liver, testis, and brain.</text>
</comment>
<comment type="disease" evidence="5 6 7 8 9 12 14 16 20 21">
    <disease id="DI-01033">
        <name>Smith-Lemli-Opitz syndrome</name>
        <acronym>SLOS</acronym>
        <description>An autosomal recessive frequent inborn disorder of sterol metabolism with characteristic congenital malformations and intellectual disability. Children with SLOS have elevated serum 7-dehydrocholesterol (7-DHC) levels and low serum cholesterol levels. SLOS occurs in relatively high frequency: approximately 1 in 20,000 to 30,000 births in populations of northern and central European background. Historically, a clinical distinction often was made between classic ('type I') SLOS and the more severely affected ('type II') patients. There is, in reality, a clinical and biochemical continuum from mild to severe SLOS.</description>
        <dbReference type="MIM" id="270400"/>
    </disease>
    <text>The disease is caused by variants affecting the gene represented in this entry.</text>
</comment>
<comment type="similarity">
    <text evidence="26">Belongs to the ERG4/ERG24 family.</text>
</comment>
<accession>Q9UBM7</accession>
<accession>B2R6Z2</accession>
<accession>O60492</accession>
<accession>O60717</accession>
<protein>
    <recommendedName>
        <fullName evidence="25">7-dehydrocholesterol reductase</fullName>
        <shortName>7-DHC reductase</shortName>
        <ecNumber evidence="14 18 19">1.3.1.21</ecNumber>
    </recommendedName>
    <alternativeName>
        <fullName evidence="23">Cholesterol-5,6-epoxide hydrolase subunit DHCR7</fullName>
        <ecNumber evidence="13">3.3.2.11</ecNumber>
    </alternativeName>
    <alternativeName>
        <fullName evidence="24">Delta7-sterol reductase</fullName>
    </alternativeName>
    <alternativeName>
        <fullName>Sterol Delta(7)-reductase</fullName>
    </alternativeName>
    <alternativeName>
        <fullName>Sterol reductase SR-2</fullName>
    </alternativeName>
</protein>
<gene>
    <name evidence="29" type="primary">DHCR7</name>
    <name type="synonym">D7SR</name>
</gene>
<name>DHCR7_HUMAN</name>